<evidence type="ECO:0000250" key="1">
    <source>
        <dbReference type="UniProtKB" id="O35219"/>
    </source>
</evidence>
<evidence type="ECO:0000250" key="2">
    <source>
        <dbReference type="UniProtKB" id="Q12809"/>
    </source>
</evidence>
<evidence type="ECO:0000250" key="3">
    <source>
        <dbReference type="UniProtKB" id="Q63472"/>
    </source>
</evidence>
<evidence type="ECO:0000255" key="4"/>
<evidence type="ECO:0000255" key="5">
    <source>
        <dbReference type="PROSITE-ProRule" id="PRU00060"/>
    </source>
</evidence>
<evidence type="ECO:0000255" key="6">
    <source>
        <dbReference type="PROSITE-ProRule" id="PRU00140"/>
    </source>
</evidence>
<evidence type="ECO:0000255" key="7">
    <source>
        <dbReference type="PROSITE-ProRule" id="PRU00141"/>
    </source>
</evidence>
<evidence type="ECO:0000256" key="8">
    <source>
        <dbReference type="SAM" id="MobiDB-lite"/>
    </source>
</evidence>
<evidence type="ECO:0000269" key="9">
    <source>
    </source>
</evidence>
<evidence type="ECO:0000269" key="10">
    <source>
    </source>
</evidence>
<evidence type="ECO:0000269" key="11">
    <source>
    </source>
</evidence>
<evidence type="ECO:0000269" key="12">
    <source>
    </source>
</evidence>
<evidence type="ECO:0000269" key="13">
    <source>
    </source>
</evidence>
<evidence type="ECO:0000303" key="14">
    <source>
    </source>
</evidence>
<evidence type="ECO:0000305" key="15"/>
<evidence type="ECO:0000312" key="16">
    <source>
        <dbReference type="RGD" id="621414"/>
    </source>
</evidence>
<evidence type="ECO:0007744" key="17">
    <source>
    </source>
</evidence>
<gene>
    <name evidence="16" type="primary">Kcnh2</name>
    <name type="synonym">Erg</name>
</gene>
<comment type="function">
    <text evidence="2 10 13">Pore-forming (alpha) subunit of voltage-gated inwardly rectifying potassium channel (PubMed:11212207, PubMed:9664620). Characterized by unusual gating kinetics by producing relatively small outward currents during membrane depolarization and large inward currents during subsequent repolarization which reflect a rapid inactivation during depolarization and quick recovery from inactivation but slow deactivation (closing) during repolarization (PubMed:11212207, PubMed:9664620). Channel properties are modulated by cAMP and subunit assembly. Forms a stable complex with KCNE1 or KCNE2, and that this heteromultimerization regulates inward rectifier potassium channel activity (By similarity).</text>
</comment>
<comment type="catalytic activity">
    <reaction evidence="10 13">
        <text>K(+)(in) = K(+)(out)</text>
        <dbReference type="Rhea" id="RHEA:29463"/>
        <dbReference type="ChEBI" id="CHEBI:29103"/>
    </reaction>
</comment>
<comment type="subunit">
    <text evidence="2 10 11">The potassium channel is probably composed of a homo- or heterotetrameric complex of pore-forming alpha subunits that can associate with modulating beta subunits. Interacts with DNAJB12 and DNAJB14; chaperones DNAJB12 and DNAJB14 promote tetramerization (By similarity). Heteromultimer with KCNH6/ERG2 and KCNH7/ERG3 (PubMed:11212207). Interacts with ALG10B (PubMed:14525949). Forms a stable complex with KCNE1 or KCNE2, and that this heteromultimerization regulates Inward rectifier potassium channel activity. Interacts with CANX. The core-glycosylated, but not the fully glycosylated form interacts with RNF207. Interacts with NDFIP1 and NDFIP2; this interaction decreases the cell membrane expression by targeting KCNH2, through interaction with NEDD4L, for the degradation through the multivesicular bodies (MVBs)-lysosomal pathway (By similarity).</text>
</comment>
<comment type="subcellular location">
    <subcellularLocation>
        <location evidence="2">Cell membrane</location>
        <topology evidence="4">Multi-pass membrane protein</topology>
    </subcellularLocation>
</comment>
<comment type="tissue specificity">
    <text evidence="9 12">Highly expressed in brain and testis, slightly less so in heart, adrenal, retina and thymus (PubMed:10718922, PubMed:9012748). Detected at lower levels in lung, soleus, tibialis, and at very low levels in cornea and lens (PubMed:10718922, PubMed:9012748). A shorter transcript is detected in skeletal muscle (PubMed:10718922). Found in pituitary (PubMed:10718922).</text>
</comment>
<comment type="domain">
    <text evidence="2">The S4-S5 linker acts as a signal integrator where it both couples voltage-sensor domain (VSD) movement to pore opening and closure, as well as providing a binding site for other domains that regulate activation and/or deactivation of the channel.</text>
</comment>
<comment type="PTM">
    <text evidence="2">Phosphorylated on serine and threonine residues. Phosphorylation by PKA inhibits ion conduction.</text>
</comment>
<comment type="similarity">
    <text evidence="15">Belongs to the potassium channel family. H (Eag) (TC 1.A.1.20) subfamily. Kv11.1/KCNH2 sub-subfamily.</text>
</comment>
<dbReference type="EMBL" id="Z96106">
    <property type="protein sequence ID" value="CAB09536.1"/>
    <property type="molecule type" value="mRNA"/>
</dbReference>
<dbReference type="EMBL" id="U75210">
    <property type="protein sequence ID" value="AAC53160.1"/>
    <property type="molecule type" value="mRNA"/>
</dbReference>
<dbReference type="RefSeq" id="NP_446401.1">
    <property type="nucleotide sequence ID" value="NM_053949.1"/>
</dbReference>
<dbReference type="BMRB" id="O08962"/>
<dbReference type="SMR" id="O08962"/>
<dbReference type="BioGRID" id="250619">
    <property type="interactions" value="2"/>
</dbReference>
<dbReference type="CORUM" id="O08962"/>
<dbReference type="FunCoup" id="O08962">
    <property type="interactions" value="127"/>
</dbReference>
<dbReference type="IntAct" id="O08962">
    <property type="interactions" value="1"/>
</dbReference>
<dbReference type="STRING" id="10116.ENSRNOP00000013800"/>
<dbReference type="GuidetoPHARMACOLOGY" id="572"/>
<dbReference type="GlyCosmos" id="O08962">
    <property type="glycosylation" value="1 site, No reported glycans"/>
</dbReference>
<dbReference type="GlyGen" id="O08962">
    <property type="glycosylation" value="2 sites"/>
</dbReference>
<dbReference type="iPTMnet" id="O08962"/>
<dbReference type="PhosphoSitePlus" id="O08962"/>
<dbReference type="PaxDb" id="10116-ENSRNOP00000013800"/>
<dbReference type="GeneID" id="117018"/>
<dbReference type="KEGG" id="rno:117018"/>
<dbReference type="AGR" id="RGD:621414"/>
<dbReference type="CTD" id="3757"/>
<dbReference type="RGD" id="621414">
    <property type="gene designation" value="Kcnh2"/>
</dbReference>
<dbReference type="eggNOG" id="KOG0498">
    <property type="taxonomic scope" value="Eukaryota"/>
</dbReference>
<dbReference type="InParanoid" id="O08962"/>
<dbReference type="PhylomeDB" id="O08962"/>
<dbReference type="Reactome" id="R-RNO-1296072">
    <property type="pathway name" value="Voltage gated Potassium channels"/>
</dbReference>
<dbReference type="Reactome" id="R-RNO-5576890">
    <property type="pathway name" value="Phase 3 - rapid repolarisation"/>
</dbReference>
<dbReference type="PRO" id="PR:O08962"/>
<dbReference type="Proteomes" id="UP000002494">
    <property type="component" value="Unplaced"/>
</dbReference>
<dbReference type="GO" id="GO:0009986">
    <property type="term" value="C:cell surface"/>
    <property type="evidence" value="ECO:0000266"/>
    <property type="project" value="RGD"/>
</dbReference>
<dbReference type="GO" id="GO:1902937">
    <property type="term" value="C:inward rectifier potassium channel complex"/>
    <property type="evidence" value="ECO:0000266"/>
    <property type="project" value="RGD"/>
</dbReference>
<dbReference type="GO" id="GO:0048471">
    <property type="term" value="C:perinuclear region of cytoplasm"/>
    <property type="evidence" value="ECO:0000266"/>
    <property type="project" value="RGD"/>
</dbReference>
<dbReference type="GO" id="GO:0005886">
    <property type="term" value="C:plasma membrane"/>
    <property type="evidence" value="ECO:0000266"/>
    <property type="project" value="RGD"/>
</dbReference>
<dbReference type="GO" id="GO:0008076">
    <property type="term" value="C:voltage-gated potassium channel complex"/>
    <property type="evidence" value="ECO:0000266"/>
    <property type="project" value="RGD"/>
</dbReference>
<dbReference type="GO" id="GO:0005251">
    <property type="term" value="F:delayed rectifier potassium channel activity"/>
    <property type="evidence" value="ECO:0000266"/>
    <property type="project" value="RGD"/>
</dbReference>
<dbReference type="GO" id="GO:0042802">
    <property type="term" value="F:identical protein binding"/>
    <property type="evidence" value="ECO:0000266"/>
    <property type="project" value="RGD"/>
</dbReference>
<dbReference type="GO" id="GO:0005242">
    <property type="term" value="F:inward rectifier potassium channel activity"/>
    <property type="evidence" value="ECO:0000314"/>
    <property type="project" value="UniProtKB"/>
</dbReference>
<dbReference type="GO" id="GO:0005216">
    <property type="term" value="F:monoatomic ion channel activity"/>
    <property type="evidence" value="ECO:0000314"/>
    <property type="project" value="RGD"/>
</dbReference>
<dbReference type="GO" id="GO:0005267">
    <property type="term" value="F:potassium channel activity"/>
    <property type="evidence" value="ECO:0000314"/>
    <property type="project" value="RGD"/>
</dbReference>
<dbReference type="GO" id="GO:0042803">
    <property type="term" value="F:protein homodimerization activity"/>
    <property type="evidence" value="ECO:0000266"/>
    <property type="project" value="RGD"/>
</dbReference>
<dbReference type="GO" id="GO:0044877">
    <property type="term" value="F:protein-containing complex binding"/>
    <property type="evidence" value="ECO:0000314"/>
    <property type="project" value="RGD"/>
</dbReference>
<dbReference type="GO" id="GO:0097110">
    <property type="term" value="F:scaffold protein binding"/>
    <property type="evidence" value="ECO:0000353"/>
    <property type="project" value="BHF-UCL"/>
</dbReference>
<dbReference type="GO" id="GO:0000976">
    <property type="term" value="F:transcription cis-regulatory region binding"/>
    <property type="evidence" value="ECO:0000266"/>
    <property type="project" value="RGD"/>
</dbReference>
<dbReference type="GO" id="GO:0031625">
    <property type="term" value="F:ubiquitin protein ligase binding"/>
    <property type="evidence" value="ECO:0000266"/>
    <property type="project" value="RGD"/>
</dbReference>
<dbReference type="GO" id="GO:0005249">
    <property type="term" value="F:voltage-gated potassium channel activity"/>
    <property type="evidence" value="ECO:0000314"/>
    <property type="project" value="RGD"/>
</dbReference>
<dbReference type="GO" id="GO:1902282">
    <property type="term" value="F:voltage-gated potassium channel activity involved in ventricular cardiac muscle cell action potential repolarization"/>
    <property type="evidence" value="ECO:0000266"/>
    <property type="project" value="RGD"/>
</dbReference>
<dbReference type="GO" id="GO:0060048">
    <property type="term" value="P:cardiac muscle contraction"/>
    <property type="evidence" value="ECO:0000266"/>
    <property type="project" value="RGD"/>
</dbReference>
<dbReference type="GO" id="GO:0071466">
    <property type="term" value="P:cellular response to xenobiotic stimulus"/>
    <property type="evidence" value="ECO:0000266"/>
    <property type="project" value="RGD"/>
</dbReference>
<dbReference type="GO" id="GO:0086010">
    <property type="term" value="P:membrane depolarization during action potential"/>
    <property type="evidence" value="ECO:0000266"/>
    <property type="project" value="RGD"/>
</dbReference>
<dbReference type="GO" id="GO:0086009">
    <property type="term" value="P:membrane repolarization"/>
    <property type="evidence" value="ECO:0000266"/>
    <property type="project" value="RGD"/>
</dbReference>
<dbReference type="GO" id="GO:0086011">
    <property type="term" value="P:membrane repolarization during action potential"/>
    <property type="evidence" value="ECO:0000266"/>
    <property type="project" value="RGD"/>
</dbReference>
<dbReference type="GO" id="GO:0086013">
    <property type="term" value="P:membrane repolarization during cardiac muscle cell action potential"/>
    <property type="evidence" value="ECO:0000266"/>
    <property type="project" value="RGD"/>
</dbReference>
<dbReference type="GO" id="GO:0098915">
    <property type="term" value="P:membrane repolarization during ventricular cardiac muscle cell action potential"/>
    <property type="evidence" value="ECO:0000266"/>
    <property type="project" value="RGD"/>
</dbReference>
<dbReference type="GO" id="GO:1903765">
    <property type="term" value="P:negative regulation of potassium ion export across plasma membrane"/>
    <property type="evidence" value="ECO:0000266"/>
    <property type="project" value="RGD"/>
</dbReference>
<dbReference type="GO" id="GO:1901380">
    <property type="term" value="P:negative regulation of potassium ion transmembrane transport"/>
    <property type="evidence" value="ECO:0000266"/>
    <property type="project" value="RGD"/>
</dbReference>
<dbReference type="GO" id="GO:0045893">
    <property type="term" value="P:positive regulation of DNA-templated transcription"/>
    <property type="evidence" value="ECO:0000266"/>
    <property type="project" value="RGD"/>
</dbReference>
<dbReference type="GO" id="GO:1901381">
    <property type="term" value="P:positive regulation of potassium ion transmembrane transport"/>
    <property type="evidence" value="ECO:0000266"/>
    <property type="project" value="RGD"/>
</dbReference>
<dbReference type="GO" id="GO:0097623">
    <property type="term" value="P:potassium ion export across plasma membrane"/>
    <property type="evidence" value="ECO:0000266"/>
    <property type="project" value="RGD"/>
</dbReference>
<dbReference type="GO" id="GO:0055075">
    <property type="term" value="P:potassium ion homeostasis"/>
    <property type="evidence" value="ECO:0000266"/>
    <property type="project" value="RGD"/>
</dbReference>
<dbReference type="GO" id="GO:1990573">
    <property type="term" value="P:potassium ion import across plasma membrane"/>
    <property type="evidence" value="ECO:0000266"/>
    <property type="project" value="RGD"/>
</dbReference>
<dbReference type="GO" id="GO:0071805">
    <property type="term" value="P:potassium ion transmembrane transport"/>
    <property type="evidence" value="ECO:0000266"/>
    <property type="project" value="RGD"/>
</dbReference>
<dbReference type="GO" id="GO:0006813">
    <property type="term" value="P:potassium ion transport"/>
    <property type="evidence" value="ECO:0000314"/>
    <property type="project" value="UniProtKB"/>
</dbReference>
<dbReference type="GO" id="GO:0086091">
    <property type="term" value="P:regulation of heart rate by cardiac conduction"/>
    <property type="evidence" value="ECO:0000266"/>
    <property type="project" value="RGD"/>
</dbReference>
<dbReference type="GO" id="GO:0042391">
    <property type="term" value="P:regulation of membrane potential"/>
    <property type="evidence" value="ECO:0000314"/>
    <property type="project" value="RGD"/>
</dbReference>
<dbReference type="GO" id="GO:0060306">
    <property type="term" value="P:regulation of membrane repolarization"/>
    <property type="evidence" value="ECO:0000266"/>
    <property type="project" value="RGD"/>
</dbReference>
<dbReference type="GO" id="GO:1901379">
    <property type="term" value="P:regulation of potassium ion transmembrane transport"/>
    <property type="evidence" value="ECO:0000266"/>
    <property type="project" value="RGD"/>
</dbReference>
<dbReference type="GO" id="GO:0060307">
    <property type="term" value="P:regulation of ventricular cardiac muscle cell membrane repolarization"/>
    <property type="evidence" value="ECO:0000266"/>
    <property type="project" value="RGD"/>
</dbReference>
<dbReference type="GO" id="GO:0021510">
    <property type="term" value="P:spinal cord development"/>
    <property type="evidence" value="ECO:0000270"/>
    <property type="project" value="RGD"/>
</dbReference>
<dbReference type="GO" id="GO:0086005">
    <property type="term" value="P:ventricular cardiac muscle cell action potential"/>
    <property type="evidence" value="ECO:0000266"/>
    <property type="project" value="RGD"/>
</dbReference>
<dbReference type="CDD" id="cd00038">
    <property type="entry name" value="CAP_ED"/>
    <property type="match status" value="1"/>
</dbReference>
<dbReference type="CDD" id="cd00130">
    <property type="entry name" value="PAS"/>
    <property type="match status" value="1"/>
</dbReference>
<dbReference type="FunFam" id="1.10.287.70:FF:000020">
    <property type="entry name" value="Potassium channel, voltage-gated eag-related subfamily H, member 7"/>
    <property type="match status" value="1"/>
</dbReference>
<dbReference type="FunFam" id="2.60.120.10:FF:000011">
    <property type="entry name" value="Potassium channel, voltage-gated eag-related subfamily H, member 7"/>
    <property type="match status" value="1"/>
</dbReference>
<dbReference type="FunFam" id="1.10.1200.260:FF:000001">
    <property type="entry name" value="Potassium voltage-gated channel subfamily H member 7"/>
    <property type="match status" value="1"/>
</dbReference>
<dbReference type="FunFam" id="3.30.450.20:FF:000001">
    <property type="entry name" value="Potassium voltage-gated channel subfamily H member 7"/>
    <property type="match status" value="1"/>
</dbReference>
<dbReference type="Gene3D" id="1.10.1200.260">
    <property type="match status" value="1"/>
</dbReference>
<dbReference type="Gene3D" id="1.10.287.70">
    <property type="match status" value="1"/>
</dbReference>
<dbReference type="Gene3D" id="2.60.120.10">
    <property type="entry name" value="Jelly Rolls"/>
    <property type="match status" value="1"/>
</dbReference>
<dbReference type="Gene3D" id="3.30.450.20">
    <property type="entry name" value="PAS domain"/>
    <property type="match status" value="1"/>
</dbReference>
<dbReference type="InterPro" id="IPR000595">
    <property type="entry name" value="cNMP-bd_dom"/>
</dbReference>
<dbReference type="InterPro" id="IPR018490">
    <property type="entry name" value="cNMP-bd_dom_sf"/>
</dbReference>
<dbReference type="InterPro" id="IPR005821">
    <property type="entry name" value="Ion_trans_dom"/>
</dbReference>
<dbReference type="InterPro" id="IPR003938">
    <property type="entry name" value="K_chnl_volt-dep_EAG/ELK/ERG"/>
</dbReference>
<dbReference type="InterPro" id="IPR003967">
    <property type="entry name" value="K_chnl_volt-dep_ERG"/>
</dbReference>
<dbReference type="InterPro" id="IPR050818">
    <property type="entry name" value="KCNH_animal-type"/>
</dbReference>
<dbReference type="InterPro" id="IPR001610">
    <property type="entry name" value="PAC"/>
</dbReference>
<dbReference type="InterPro" id="IPR000014">
    <property type="entry name" value="PAS"/>
</dbReference>
<dbReference type="InterPro" id="IPR000700">
    <property type="entry name" value="PAS-assoc_C"/>
</dbReference>
<dbReference type="InterPro" id="IPR035965">
    <property type="entry name" value="PAS-like_dom_sf"/>
</dbReference>
<dbReference type="InterPro" id="IPR014710">
    <property type="entry name" value="RmlC-like_jellyroll"/>
</dbReference>
<dbReference type="NCBIfam" id="TIGR00229">
    <property type="entry name" value="sensory_box"/>
    <property type="match status" value="1"/>
</dbReference>
<dbReference type="PANTHER" id="PTHR10217:SF506">
    <property type="entry name" value="POTASSIUM VOLTAGE-GATED CHANNEL SUBFAMILY H MEMBER 2"/>
    <property type="match status" value="1"/>
</dbReference>
<dbReference type="PANTHER" id="PTHR10217">
    <property type="entry name" value="VOLTAGE AND LIGAND GATED POTASSIUM CHANNEL"/>
    <property type="match status" value="1"/>
</dbReference>
<dbReference type="Pfam" id="PF00027">
    <property type="entry name" value="cNMP_binding"/>
    <property type="match status" value="1"/>
</dbReference>
<dbReference type="Pfam" id="PF00520">
    <property type="entry name" value="Ion_trans"/>
    <property type="match status" value="1"/>
</dbReference>
<dbReference type="Pfam" id="PF13426">
    <property type="entry name" value="PAS_9"/>
    <property type="match status" value="1"/>
</dbReference>
<dbReference type="PRINTS" id="PR01463">
    <property type="entry name" value="EAGCHANLFMLY"/>
</dbReference>
<dbReference type="PRINTS" id="PR01470">
    <property type="entry name" value="ERGCHANNEL"/>
</dbReference>
<dbReference type="SMART" id="SM00100">
    <property type="entry name" value="cNMP"/>
    <property type="match status" value="1"/>
</dbReference>
<dbReference type="SMART" id="SM00086">
    <property type="entry name" value="PAC"/>
    <property type="match status" value="1"/>
</dbReference>
<dbReference type="SUPFAM" id="SSF51206">
    <property type="entry name" value="cAMP-binding domain-like"/>
    <property type="match status" value="1"/>
</dbReference>
<dbReference type="SUPFAM" id="SSF55785">
    <property type="entry name" value="PYP-like sensor domain (PAS domain)"/>
    <property type="match status" value="1"/>
</dbReference>
<dbReference type="SUPFAM" id="SSF81324">
    <property type="entry name" value="Voltage-gated potassium channels"/>
    <property type="match status" value="1"/>
</dbReference>
<dbReference type="PROSITE" id="PS50042">
    <property type="entry name" value="CNMP_BINDING_3"/>
    <property type="match status" value="1"/>
</dbReference>
<dbReference type="PROSITE" id="PS50113">
    <property type="entry name" value="PAC"/>
    <property type="match status" value="1"/>
</dbReference>
<dbReference type="PROSITE" id="PS50112">
    <property type="entry name" value="PAS"/>
    <property type="match status" value="1"/>
</dbReference>
<proteinExistence type="evidence at protein level"/>
<reference key="1">
    <citation type="journal article" date="1998" name="Recept. Channels">
        <title>RERG is a molecular correlate of the inward-rectifying K current in clonal rat pituitary cells.</title>
        <authorList>
            <person name="Bauer C.K."/>
            <person name="Engeland B."/>
            <person name="Wulfsen I."/>
            <person name="Ludwig J."/>
            <person name="Pongs O."/>
            <person name="Schwarz J.R."/>
        </authorList>
    </citation>
    <scope>NUCLEOTIDE SEQUENCE [MRNA]</scope>
    <scope>FUNCTION</scope>
    <scope>TRANSPORTER ACTIVITY</scope>
    <source>
        <tissue>Brain cortex</tissue>
    </source>
</reference>
<reference key="2">
    <citation type="journal article" date="1997" name="Circ. Res.">
        <title>Tissue and species distribution of mRNA for the IKr-like K+ channel, erg.</title>
        <authorList>
            <person name="Wymore R.S."/>
            <person name="Gintant G.A."/>
            <person name="Wymore R.T."/>
            <person name="Dixon J.E."/>
            <person name="McKinnon D."/>
            <person name="Cohen I.S."/>
        </authorList>
    </citation>
    <scope>NUCLEOTIDE SEQUENCE [MRNA] OF 409-568</scope>
    <scope>TISSUE SPECIFICITY</scope>
</reference>
<reference key="3">
    <citation type="journal article" date="2000" name="J. Neuroendocrinol.">
        <title>Expression of mRNA for voltage-dependent and inward-rectifying K channels in GH3/B6 cells and rat pituitary.</title>
        <authorList>
            <person name="Wulfsen I."/>
            <person name="Hauber H.-P."/>
            <person name="Schiemann D."/>
            <person name="Bauer C.K."/>
            <person name="Schwarz J.R."/>
        </authorList>
    </citation>
    <scope>TISSUE SPECIFICITY</scope>
</reference>
<reference key="4">
    <citation type="journal article" date="2001" name="Pflugers Arch.">
        <title>Erg1, erg2 and erg3 K channel subunits are able to form heteromultimers.</title>
        <authorList>
            <person name="Wimmers S."/>
            <person name="Wulfsen I."/>
            <person name="Bauer C.K."/>
            <person name="Schwarz J.R."/>
        </authorList>
    </citation>
    <scope>FUNCTION</scope>
    <scope>TRANSPORTER ACTIVITY</scope>
    <scope>INTERACTION WITH KCNH6 AND KCNH7</scope>
    <scope>MUTAGENESIS OF GLY-630</scope>
</reference>
<reference key="5">
    <citation type="journal article" date="2003" name="FASEB J.">
        <title>The IKr drug response is modulated by KCR1 in transfected cardiac and noncardiac cell lines.</title>
        <authorList>
            <person name="Kupershmidt S."/>
            <person name="Yang I.C.-H."/>
            <person name="Hayashi K."/>
            <person name="Wei J."/>
            <person name="Chanthaphaychith S."/>
            <person name="Petersen C.I."/>
            <person name="Johns D.C."/>
            <person name="George A.L. Jr."/>
            <person name="Roden D.M."/>
            <person name="Balser J.R."/>
        </authorList>
    </citation>
    <scope>INTERACTION WITH ALG10B</scope>
</reference>
<reference key="6">
    <citation type="journal article" date="2012" name="Nat. Commun.">
        <title>Quantitative maps of protein phosphorylation sites across 14 different rat organs and tissues.</title>
        <authorList>
            <person name="Lundby A."/>
            <person name="Secher A."/>
            <person name="Lage K."/>
            <person name="Nordsborg N.B."/>
            <person name="Dmytriyev A."/>
            <person name="Lundby C."/>
            <person name="Olsen J.V."/>
        </authorList>
    </citation>
    <scope>PHOSPHORYLATION [LARGE SCALE ANALYSIS] AT SER-285; SER-286 AND SER-353</scope>
    <scope>IDENTIFICATION BY MASS SPECTROMETRY [LARGE SCALE ANALYSIS]</scope>
</reference>
<protein>
    <recommendedName>
        <fullName evidence="15">Voltage-gated inwardly rectifying potassium channel KCNH2</fullName>
    </recommendedName>
    <alternativeName>
        <fullName>Ether-a-go-go-related gene potassium channel 1</fullName>
        <shortName>ERG-1</shortName>
        <shortName>Eag-related protein 1</shortName>
        <shortName>Ether-a-go-go-related protein 1</shortName>
        <shortName evidence="14">RERG</shortName>
        <shortName evidence="14">r-ERG</shortName>
    </alternativeName>
    <alternativeName>
        <fullName>Potassium voltage-gated channel subfamily H member 2</fullName>
    </alternativeName>
    <alternativeName>
        <fullName>Voltage-gated potassium channel subunit Kv11.1</fullName>
    </alternativeName>
</protein>
<sequence length="1163" mass="126952">MPVRRGHVAPQNTFLDTIIRKFEGQSRKFIIANARVENCAVIYCNDGFCELCGYSRAEVMQRPCTCDFLHGPRTQRRAAAQIAQALLGAEERKVEIAFYRKDGSCFLCLVDVVPVKNEDGAVIMFILNFEVVMEKDMVGSPAHDTNHRGPSTSWLASGRAKTFRLKLPALLALTARESPMRTGSTGSPGAPGAVVVDVDLTPAAPSSESLALDEVSAMDNHVAGLGPAEERRALVGPASASPVASIPGPHPSPRAQSLNPDASGSSCSLARTRSRESCASVRRASSADDIEAMRAGALPLPPRHASTGAMHPLRSGLLNSTSDSDLVRYRTISKIPQITLNFVDLKGDPFLASPTSDREIIAPKIKERTHNVTEKVTQVLSLGADVLPEYKLQAPRIHRWTILHYSPFKAVWDWLILLLVIYTAVFTPYSAAFLLKETEDGSQAPDCGYACQPLAVVDLLVDIMFIVDILINFRTTYVNANEEVVSHPGRIAVHYFKGWFLIDMVAAIPFDLLIFGSGSEELIGLLKTARLLRLVRVARKLDRYSEYGAAVLFLLMCTFALIAHWLACIWYAIGNMEQPHMDSHIGWLHNLGDQIGKPYNSSGLGGPSIKDKYVTALYFTFSSLTSVGFGNVSPNTNSEKIFSICVMLIGSLMYASIFGNVSAIIQRLYSGTARYHTQMLRVREFIRFHQIPNPLRQRLEEYFQHAWSYTNGIDMNAVLKGFPECLQADICLHLNRSLLQHCKPFRGATKGCLRALAMKFKTTHAPPGDTLVHAGDLLTALYFISRGSIEILRGDVVVAILGKNDIFGEPLNLYARPGKSNGDVRALTYCDLHKIHRDDLLEVLDMYPEFSDHFWSSLEITFNLRDTNMIPGSPSSAELESGFNRQRKRKLSFRRRTDKDTEQPGEVSALGQGPARVGPGPSCRGQPGGPWGESPSSGPSSPESSEDEGPGRSSSPLRLVPFSSPRPPGDSPGGEPLTEDGEKSSDTCNPLSGAFSGVSNIFSFWGDSRGRQYQELPRCPAPAPSLLNIPLSSPGRRSRGDVESRLDALQRQLNRLETRLSADMATVLQLLQRQMTLVPPAYSAVTTPGPGPTSTSPLLPVGPVPTLTLDSLSQVSQFVAFEELPAGAPELPQDGPTRRLSLPGQLGALTSQPLHRHGSDPGS</sequence>
<feature type="chain" id="PRO_0000054003" description="Voltage-gated inwardly rectifying potassium channel KCNH2">
    <location>
        <begin position="1"/>
        <end position="1163"/>
    </location>
</feature>
<feature type="topological domain" description="Cytoplasmic" evidence="4">
    <location>
        <begin position="1"/>
        <end position="405"/>
    </location>
</feature>
<feature type="transmembrane region" description="Helical; Name=Segment S1" evidence="4">
    <location>
        <begin position="406"/>
        <end position="426"/>
    </location>
</feature>
<feature type="topological domain" description="Extracellular" evidence="4">
    <location>
        <begin position="427"/>
        <end position="452"/>
    </location>
</feature>
<feature type="transmembrane region" description="Helical; Name=Segment S2" evidence="4">
    <location>
        <begin position="453"/>
        <end position="473"/>
    </location>
</feature>
<feature type="topological domain" description="Cytoplasmic" evidence="4">
    <location>
        <begin position="474"/>
        <end position="497"/>
    </location>
</feature>
<feature type="transmembrane region" description="Helical; Name=Segment S3" evidence="4">
    <location>
        <begin position="498"/>
        <end position="518"/>
    </location>
</feature>
<feature type="topological domain" description="Extracellular" evidence="4">
    <location>
        <begin position="519"/>
        <end position="522"/>
    </location>
</feature>
<feature type="transmembrane region" description="Helical; Voltage-sensor; Name=Segment S4" evidence="4">
    <location>
        <begin position="523"/>
        <end position="543"/>
    </location>
</feature>
<feature type="topological domain" description="Cytoplasmic" evidence="4">
    <location>
        <begin position="544"/>
        <end position="549"/>
    </location>
</feature>
<feature type="transmembrane region" description="Helical; Name=Segment S5" evidence="4">
    <location>
        <begin position="550"/>
        <end position="570"/>
    </location>
</feature>
<feature type="topological domain" description="Extracellular" evidence="4">
    <location>
        <begin position="571"/>
        <end position="613"/>
    </location>
</feature>
<feature type="intramembrane region" description="Pore-forming; Name=Segment H5" evidence="4">
    <location>
        <begin position="614"/>
        <end position="634"/>
    </location>
</feature>
<feature type="topological domain" description="Extracellular" evidence="4">
    <location>
        <begin position="635"/>
        <end position="640"/>
    </location>
</feature>
<feature type="transmembrane region" description="Helical; Name=Segment S6" evidence="4">
    <location>
        <begin position="641"/>
        <end position="661"/>
    </location>
</feature>
<feature type="topological domain" description="Cytoplasmic" evidence="4">
    <location>
        <begin position="662"/>
        <end position="1163"/>
    </location>
</feature>
<feature type="domain" description="PAS" evidence="6">
    <location>
        <begin position="17"/>
        <end position="88"/>
    </location>
</feature>
<feature type="domain" description="PAC" evidence="7">
    <location>
        <begin position="92"/>
        <end position="144"/>
    </location>
</feature>
<feature type="region of interest" description="Disordered" evidence="8">
    <location>
        <begin position="235"/>
        <end position="286"/>
    </location>
</feature>
<feature type="region of interest" description="cNMP-binding domain" evidence="5">
    <location>
        <begin position="744"/>
        <end position="844"/>
    </location>
</feature>
<feature type="region of interest" description="Disordered" evidence="8">
    <location>
        <begin position="873"/>
        <end position="992"/>
    </location>
</feature>
<feature type="region of interest" description="Disordered" evidence="8">
    <location>
        <begin position="1015"/>
        <end position="1043"/>
    </location>
</feature>
<feature type="region of interest" description="Disordered" evidence="8">
    <location>
        <begin position="1126"/>
        <end position="1163"/>
    </location>
</feature>
<feature type="coiled-coil region" evidence="4">
    <location>
        <begin position="1039"/>
        <end position="1066"/>
    </location>
</feature>
<feature type="short sequence motif" description="Selectivity filter" evidence="3">
    <location>
        <begin position="626"/>
        <end position="631"/>
    </location>
</feature>
<feature type="compositionally biased region" description="Polar residues" evidence="8">
    <location>
        <begin position="254"/>
        <end position="271"/>
    </location>
</feature>
<feature type="compositionally biased region" description="Basic residues" evidence="8">
    <location>
        <begin position="885"/>
        <end position="894"/>
    </location>
</feature>
<feature type="compositionally biased region" description="Low complexity" evidence="8">
    <location>
        <begin position="932"/>
        <end position="943"/>
    </location>
</feature>
<feature type="modified residue" description="Phosphoserine" evidence="2">
    <location>
        <position position="239"/>
    </location>
</feature>
<feature type="modified residue" description="Phosphoserine" evidence="1">
    <location>
        <position position="245"/>
    </location>
</feature>
<feature type="modified residue" description="Phosphoserine" evidence="17">
    <location>
        <position position="285"/>
    </location>
</feature>
<feature type="modified residue" description="Phosphoserine" evidence="17">
    <location>
        <position position="286"/>
    </location>
</feature>
<feature type="modified residue" description="Phosphoserine" evidence="2">
    <location>
        <position position="322"/>
    </location>
</feature>
<feature type="modified residue" description="Phosphoserine" evidence="17">
    <location>
        <position position="353"/>
    </location>
</feature>
<feature type="modified residue" description="Phosphoserine" evidence="2">
    <location>
        <position position="873"/>
    </location>
</feature>
<feature type="modified residue" description="Phosphoserine" evidence="1">
    <location>
        <position position="876"/>
    </location>
</feature>
<feature type="modified residue" description="Omega-N-methylarginine" evidence="1">
    <location>
        <position position="1018"/>
    </location>
</feature>
<feature type="modified residue" description="Phosphoserine" evidence="2">
    <location>
        <position position="1141"/>
    </location>
</feature>
<feature type="glycosylation site" description="N-linked (GlcNAc...) asparagine" evidence="4">
    <location>
        <position position="600"/>
    </location>
</feature>
<feature type="mutagenesis site" description="Dominant negative mutant; abolishes ERG current." evidence="10">
    <original>G</original>
    <variation>S</variation>
    <location>
        <position position="630"/>
    </location>
</feature>
<feature type="sequence conflict" description="In Ref. 2; AAC53160." evidence="15" ref="2">
    <original>V</original>
    <variation>A</variation>
    <location>
        <position position="411"/>
    </location>
</feature>
<name>KCNH2_RAT</name>
<accession>O08962</accession>
<accession>O08720</accession>
<organism>
    <name type="scientific">Rattus norvegicus</name>
    <name type="common">Rat</name>
    <dbReference type="NCBI Taxonomy" id="10116"/>
    <lineage>
        <taxon>Eukaryota</taxon>
        <taxon>Metazoa</taxon>
        <taxon>Chordata</taxon>
        <taxon>Craniata</taxon>
        <taxon>Vertebrata</taxon>
        <taxon>Euteleostomi</taxon>
        <taxon>Mammalia</taxon>
        <taxon>Eutheria</taxon>
        <taxon>Euarchontoglires</taxon>
        <taxon>Glires</taxon>
        <taxon>Rodentia</taxon>
        <taxon>Myomorpha</taxon>
        <taxon>Muroidea</taxon>
        <taxon>Muridae</taxon>
        <taxon>Murinae</taxon>
        <taxon>Rattus</taxon>
    </lineage>
</organism>
<keyword id="KW-1003">Cell membrane</keyword>
<keyword id="KW-0175">Coiled coil</keyword>
<keyword id="KW-0325">Glycoprotein</keyword>
<keyword id="KW-0407">Ion channel</keyword>
<keyword id="KW-0406">Ion transport</keyword>
<keyword id="KW-0472">Membrane</keyword>
<keyword id="KW-0488">Methylation</keyword>
<keyword id="KW-0597">Phosphoprotein</keyword>
<keyword id="KW-0630">Potassium</keyword>
<keyword id="KW-0631">Potassium channel</keyword>
<keyword id="KW-0633">Potassium transport</keyword>
<keyword id="KW-1185">Reference proteome</keyword>
<keyword id="KW-0812">Transmembrane</keyword>
<keyword id="KW-1133">Transmembrane helix</keyword>
<keyword id="KW-0813">Transport</keyword>
<keyword id="KW-0851">Voltage-gated channel</keyword>